<sequence length="18" mass="1872">RSLCSNGCRPKPFGGCSC</sequence>
<comment type="subcellular location">
    <subcellularLocation>
        <location evidence="2">Secreted</location>
    </subcellularLocation>
</comment>
<comment type="tissue specificity">
    <text evidence="5">Expressed by the venom gland.</text>
</comment>
<comment type="mass spectrometry" mass="1866.81" error="0.2" method="MALDI" evidence="2"/>
<comment type="similarity">
    <text evidence="4">Belongs to the poneritoxin-Ae1 family.</text>
</comment>
<organism>
    <name type="scientific">Anochetus emarginatus</name>
    <name type="common">Ant</name>
    <name type="synonym">Stenomyrmex emarginatus</name>
    <dbReference type="NCBI Taxonomy" id="486636"/>
    <lineage>
        <taxon>Eukaryota</taxon>
        <taxon>Metazoa</taxon>
        <taxon>Ecdysozoa</taxon>
        <taxon>Arthropoda</taxon>
        <taxon>Hexapoda</taxon>
        <taxon>Insecta</taxon>
        <taxon>Pterygota</taxon>
        <taxon>Neoptera</taxon>
        <taxon>Endopterygota</taxon>
        <taxon>Hymenoptera</taxon>
        <taxon>Apocrita</taxon>
        <taxon>Aculeata</taxon>
        <taxon>Formicoidea</taxon>
        <taxon>Formicidae</taxon>
        <taxon>Ponerinae</taxon>
        <taxon>Ponerini</taxon>
        <taxon>Anochetus</taxon>
    </lineage>
</organism>
<evidence type="ECO:0000250" key="1">
    <source>
        <dbReference type="UniProtKB" id="C0HJY4"/>
    </source>
</evidence>
<evidence type="ECO:0000269" key="2">
    <source>
    </source>
</evidence>
<evidence type="ECO:0000303" key="3">
    <source>
    </source>
</evidence>
<evidence type="ECO:0000305" key="4"/>
<evidence type="ECO:0000305" key="5">
    <source>
    </source>
</evidence>
<protein>
    <recommendedName>
        <fullName evidence="3">U1-poneritoxin-Ae1d</fullName>
        <shortName evidence="3">U1-PONTX-Ae1d</shortName>
    </recommendedName>
    <alternativeName>
        <fullName evidence="4">Poneratoxin</fullName>
    </alternativeName>
</protein>
<keyword id="KW-0027">Amidation</keyword>
<keyword id="KW-0903">Direct protein sequencing</keyword>
<keyword id="KW-1015">Disulfide bond</keyword>
<keyword id="KW-0964">Secreted</keyword>
<keyword id="KW-0800">Toxin</keyword>
<feature type="peptide" id="PRO_0000437876" description="U1-poneritoxin-Ae1d" evidence="2">
    <location>
        <begin position="1"/>
        <end position="18"/>
    </location>
</feature>
<feature type="modified residue" description="Cysteine amide" evidence="2">
    <location>
        <position position="18"/>
    </location>
</feature>
<feature type="disulfide bond" evidence="1">
    <location>
        <begin position="4"/>
        <end position="16"/>
    </location>
</feature>
<feature type="disulfide bond" evidence="1">
    <location>
        <begin position="8"/>
        <end position="18"/>
    </location>
</feature>
<reference key="1">
    <citation type="journal article" date="2016" name="Biochim. Biophys. Acta">
        <title>Isolation and characterization of a structurally unique beta-hairpin venom peptide from the predatory ant Anochetus emarginatus.</title>
        <authorList>
            <person name="Touchard A."/>
            <person name="Brust A."/>
            <person name="Cardoso F."/>
            <person name="Chin Y.-K."/>
            <person name="Herzig V."/>
            <person name="Jin A.-H."/>
            <person name="Dejean A."/>
            <person name="Alewood P."/>
            <person name="King G."/>
            <person name="Orivel J."/>
            <person name="Escoubas P."/>
        </authorList>
    </citation>
    <scope>PROTEIN SEQUENCE</scope>
    <scope>SUBCELLULAR LOCATION</scope>
    <scope>MASS SPECTROMETRY</scope>
    <scope>AMIDATION AT CYS-18</scope>
    <scope>IDENTIFICATION BY MASS SPECTROMETRY</scope>
    <source>
        <tissue>Venom</tissue>
    </source>
</reference>
<dbReference type="GO" id="GO:0005576">
    <property type="term" value="C:extracellular region"/>
    <property type="evidence" value="ECO:0007669"/>
    <property type="project" value="UniProtKB-SubCell"/>
</dbReference>
<dbReference type="GO" id="GO:0090729">
    <property type="term" value="F:toxin activity"/>
    <property type="evidence" value="ECO:0007669"/>
    <property type="project" value="UniProtKB-KW"/>
</dbReference>
<proteinExistence type="evidence at protein level"/>
<name>PON1D_ANOEM</name>
<accession>C0HJY7</accession>